<evidence type="ECO:0000255" key="1">
    <source>
        <dbReference type="HAMAP-Rule" id="MF_01338"/>
    </source>
</evidence>
<proteinExistence type="inferred from homology"/>
<comment type="function">
    <text evidence="1">RuBisCO catalyzes two reactions: the carboxylation of D-ribulose 1,5-bisphosphate, the primary event in carbon dioxide fixation, as well as the oxidative fragmentation of the pentose substrate in the photorespiration process. Both reactions occur simultaneously and in competition at the same active site.</text>
</comment>
<comment type="catalytic activity">
    <reaction evidence="1">
        <text>2 (2R)-3-phosphoglycerate + 2 H(+) = D-ribulose 1,5-bisphosphate + CO2 + H2O</text>
        <dbReference type="Rhea" id="RHEA:23124"/>
        <dbReference type="ChEBI" id="CHEBI:15377"/>
        <dbReference type="ChEBI" id="CHEBI:15378"/>
        <dbReference type="ChEBI" id="CHEBI:16526"/>
        <dbReference type="ChEBI" id="CHEBI:57870"/>
        <dbReference type="ChEBI" id="CHEBI:58272"/>
        <dbReference type="EC" id="4.1.1.39"/>
    </reaction>
</comment>
<comment type="catalytic activity">
    <reaction evidence="1">
        <text>D-ribulose 1,5-bisphosphate + O2 = 2-phosphoglycolate + (2R)-3-phosphoglycerate + 2 H(+)</text>
        <dbReference type="Rhea" id="RHEA:36631"/>
        <dbReference type="ChEBI" id="CHEBI:15378"/>
        <dbReference type="ChEBI" id="CHEBI:15379"/>
        <dbReference type="ChEBI" id="CHEBI:57870"/>
        <dbReference type="ChEBI" id="CHEBI:58033"/>
        <dbReference type="ChEBI" id="CHEBI:58272"/>
    </reaction>
</comment>
<comment type="cofactor">
    <cofactor evidence="1">
        <name>Mg(2+)</name>
        <dbReference type="ChEBI" id="CHEBI:18420"/>
    </cofactor>
    <text evidence="1">Binds 1 Mg(2+) ion per subunit.</text>
</comment>
<comment type="subunit">
    <text evidence="1">Heterohexadecamer of 8 large chains and 8 small chains; disulfide-linked. The disulfide link is formed within the large subunit homodimers.</text>
</comment>
<comment type="subcellular location">
    <subcellularLocation>
        <location>Plastid</location>
        <location>Chloroplast</location>
    </subcellularLocation>
</comment>
<comment type="PTM">
    <text evidence="1">The disulfide bond which can form in the large chain dimeric partners within the hexadecamer appears to be associated with oxidative stress and protein turnover.</text>
</comment>
<comment type="miscellaneous">
    <text evidence="1">The basic functional RuBisCO is composed of a large chain homodimer in a 'head-to-tail' conformation. In form I RuBisCO this homodimer is arranged in a barrel-like tetramer with the small subunits forming a tetrameric 'cap' on each end of the 'barrel'.</text>
</comment>
<comment type="similarity">
    <text evidence="1">Belongs to the RuBisCO large chain family. Type I subfamily.</text>
</comment>
<organism>
    <name type="scientific">Flaveria pringlei</name>
    <dbReference type="NCBI Taxonomy" id="4226"/>
    <lineage>
        <taxon>Eukaryota</taxon>
        <taxon>Viridiplantae</taxon>
        <taxon>Streptophyta</taxon>
        <taxon>Embryophyta</taxon>
        <taxon>Tracheophyta</taxon>
        <taxon>Spermatophyta</taxon>
        <taxon>Magnoliopsida</taxon>
        <taxon>eudicotyledons</taxon>
        <taxon>Gunneridae</taxon>
        <taxon>Pentapetalae</taxon>
        <taxon>asterids</taxon>
        <taxon>campanulids</taxon>
        <taxon>Asterales</taxon>
        <taxon>Asteraceae</taxon>
        <taxon>Asteroideae</taxon>
        <taxon>Heliantheae alliance</taxon>
        <taxon>Tageteae</taxon>
        <taxon>Flaveria</taxon>
    </lineage>
</organism>
<accession>P19162</accession>
<feature type="propeptide" id="PRO_0000031223" evidence="1">
    <location>
        <begin position="1"/>
        <end position="2"/>
    </location>
</feature>
<feature type="chain" id="PRO_0000031224" description="Ribulose bisphosphate carboxylase large chain">
    <location>
        <begin position="3"/>
        <end position="485"/>
    </location>
</feature>
<feature type="active site" description="Proton acceptor" evidence="1">
    <location>
        <position position="175"/>
    </location>
</feature>
<feature type="active site" description="Proton acceptor" evidence="1">
    <location>
        <position position="294"/>
    </location>
</feature>
<feature type="binding site" description="in homodimeric partner" evidence="1">
    <location>
        <position position="123"/>
    </location>
    <ligand>
        <name>substrate</name>
    </ligand>
</feature>
<feature type="binding site" evidence="1">
    <location>
        <position position="173"/>
    </location>
    <ligand>
        <name>substrate</name>
    </ligand>
</feature>
<feature type="binding site" evidence="1">
    <location>
        <position position="177"/>
    </location>
    <ligand>
        <name>substrate</name>
    </ligand>
</feature>
<feature type="binding site" description="via carbamate group" evidence="1">
    <location>
        <position position="201"/>
    </location>
    <ligand>
        <name>Mg(2+)</name>
        <dbReference type="ChEBI" id="CHEBI:18420"/>
    </ligand>
</feature>
<feature type="binding site" evidence="1">
    <location>
        <position position="203"/>
    </location>
    <ligand>
        <name>Mg(2+)</name>
        <dbReference type="ChEBI" id="CHEBI:18420"/>
    </ligand>
</feature>
<feature type="binding site" evidence="1">
    <location>
        <position position="204"/>
    </location>
    <ligand>
        <name>Mg(2+)</name>
        <dbReference type="ChEBI" id="CHEBI:18420"/>
    </ligand>
</feature>
<feature type="binding site" evidence="1">
    <location>
        <position position="295"/>
    </location>
    <ligand>
        <name>substrate</name>
    </ligand>
</feature>
<feature type="binding site" evidence="1">
    <location>
        <position position="327"/>
    </location>
    <ligand>
        <name>substrate</name>
    </ligand>
</feature>
<feature type="binding site" evidence="1">
    <location>
        <position position="379"/>
    </location>
    <ligand>
        <name>substrate</name>
    </ligand>
</feature>
<feature type="site" description="Transition state stabilizer" evidence="1">
    <location>
        <position position="334"/>
    </location>
</feature>
<feature type="modified residue" description="N-acetylproline" evidence="1">
    <location>
        <position position="3"/>
    </location>
</feature>
<feature type="modified residue" description="N6,N6,N6-trimethyllysine" evidence="1">
    <location>
        <position position="14"/>
    </location>
</feature>
<feature type="modified residue" description="N6-carboxylysine" evidence="1">
    <location>
        <position position="201"/>
    </location>
</feature>
<feature type="disulfide bond" description="Interchain; in linked form" evidence="1">
    <location>
        <position position="247"/>
    </location>
</feature>
<gene>
    <name evidence="1" type="primary">rbcL</name>
</gene>
<protein>
    <recommendedName>
        <fullName evidence="1">Ribulose bisphosphate carboxylase large chain</fullName>
        <shortName evidence="1">RuBisCO large subunit</shortName>
        <ecNumber evidence="1">4.1.1.39</ecNumber>
    </recommendedName>
</protein>
<sequence length="485" mass="53875">MSPQTETKASVGFKAGVKDYKLTYYTPEYETKDTDILAAFRVTPQPGVPPEEAGAAVAAESSTGTWTTVWTDGLTSLDRYKGRCYGIEPVPGEDNQYIAYVAYPLDLFEEGSVTNMFTSIVGNVFGFKALRALRLEDLRIPTAYVKTFEGPPHGIQVERDKLNKYGRPLLGCTIKPKLGLSAKNYGRACYECLRGGLDFTKDDENVNSQPFMRWRDRFLFCAEAIYKAQAETGEIKGHYLNATAGTCEEMLKRAVFARELGVPIVMHDYLTGGFTANTSLSHYCRDNGLLLHIHRAMHAVIDRQKNHGMHFRVLAKALRMSGGDHIHSGTVVGKLEGEREITLGFVDLLRDDFIEKDRSRGIYFTQDWVSLPGVLPVASGGIHVWHMPALTEIFGDDSVLQFGGGTLGHPWGNAPGAVANRVALEACVQARNEGRDLATEGNEIIREATKWSPELAAACEVWKEIKFEFQAMDTLDTDKDKDKKR</sequence>
<keyword id="KW-0007">Acetylation</keyword>
<keyword id="KW-0113">Calvin cycle</keyword>
<keyword id="KW-0120">Carbon dioxide fixation</keyword>
<keyword id="KW-0150">Chloroplast</keyword>
<keyword id="KW-1015">Disulfide bond</keyword>
<keyword id="KW-0456">Lyase</keyword>
<keyword id="KW-0460">Magnesium</keyword>
<keyword id="KW-0479">Metal-binding</keyword>
<keyword id="KW-0488">Methylation</keyword>
<keyword id="KW-0503">Monooxygenase</keyword>
<keyword id="KW-0560">Oxidoreductase</keyword>
<keyword id="KW-0601">Photorespiration</keyword>
<keyword id="KW-0602">Photosynthesis</keyword>
<keyword id="KW-0934">Plastid</keyword>
<name>RBL_FLAPR</name>
<dbReference type="EC" id="4.1.1.39" evidence="1"/>
<dbReference type="EMBL" id="X55829">
    <property type="protein sequence ID" value="CAA39355.1"/>
    <property type="molecule type" value="Genomic_DNA"/>
</dbReference>
<dbReference type="PIR" id="C34921">
    <property type="entry name" value="RKFPLP"/>
</dbReference>
<dbReference type="SMR" id="P19162"/>
<dbReference type="GO" id="GO:0009507">
    <property type="term" value="C:chloroplast"/>
    <property type="evidence" value="ECO:0007669"/>
    <property type="project" value="UniProtKB-SubCell"/>
</dbReference>
<dbReference type="GO" id="GO:0000287">
    <property type="term" value="F:magnesium ion binding"/>
    <property type="evidence" value="ECO:0007669"/>
    <property type="project" value="UniProtKB-UniRule"/>
</dbReference>
<dbReference type="GO" id="GO:0004497">
    <property type="term" value="F:monooxygenase activity"/>
    <property type="evidence" value="ECO:0007669"/>
    <property type="project" value="UniProtKB-KW"/>
</dbReference>
<dbReference type="GO" id="GO:0016984">
    <property type="term" value="F:ribulose-bisphosphate carboxylase activity"/>
    <property type="evidence" value="ECO:0007669"/>
    <property type="project" value="UniProtKB-UniRule"/>
</dbReference>
<dbReference type="GO" id="GO:0009853">
    <property type="term" value="P:photorespiration"/>
    <property type="evidence" value="ECO:0007669"/>
    <property type="project" value="UniProtKB-KW"/>
</dbReference>
<dbReference type="GO" id="GO:0019253">
    <property type="term" value="P:reductive pentose-phosphate cycle"/>
    <property type="evidence" value="ECO:0007669"/>
    <property type="project" value="UniProtKB-UniRule"/>
</dbReference>
<dbReference type="CDD" id="cd08212">
    <property type="entry name" value="RuBisCO_large_I"/>
    <property type="match status" value="1"/>
</dbReference>
<dbReference type="FunFam" id="3.20.20.110:FF:000001">
    <property type="entry name" value="Ribulose bisphosphate carboxylase large chain"/>
    <property type="match status" value="1"/>
</dbReference>
<dbReference type="FunFam" id="3.30.70.150:FF:000001">
    <property type="entry name" value="Ribulose bisphosphate carboxylase large chain"/>
    <property type="match status" value="1"/>
</dbReference>
<dbReference type="Gene3D" id="3.20.20.110">
    <property type="entry name" value="Ribulose bisphosphate carboxylase, large subunit, C-terminal domain"/>
    <property type="match status" value="1"/>
</dbReference>
<dbReference type="Gene3D" id="3.30.70.150">
    <property type="entry name" value="RuBisCO large subunit, N-terminal domain"/>
    <property type="match status" value="1"/>
</dbReference>
<dbReference type="HAMAP" id="MF_01338">
    <property type="entry name" value="RuBisCO_L_type1"/>
    <property type="match status" value="1"/>
</dbReference>
<dbReference type="InterPro" id="IPR033966">
    <property type="entry name" value="RuBisCO"/>
</dbReference>
<dbReference type="InterPro" id="IPR020878">
    <property type="entry name" value="RuBisCo_large_chain_AS"/>
</dbReference>
<dbReference type="InterPro" id="IPR000685">
    <property type="entry name" value="RuBisCO_lsu_C"/>
</dbReference>
<dbReference type="InterPro" id="IPR036376">
    <property type="entry name" value="RuBisCO_lsu_C_sf"/>
</dbReference>
<dbReference type="InterPro" id="IPR017443">
    <property type="entry name" value="RuBisCO_lsu_fd_N"/>
</dbReference>
<dbReference type="InterPro" id="IPR036422">
    <property type="entry name" value="RuBisCO_lsu_N_sf"/>
</dbReference>
<dbReference type="InterPro" id="IPR020888">
    <property type="entry name" value="RuBisCO_lsuI"/>
</dbReference>
<dbReference type="NCBIfam" id="NF003252">
    <property type="entry name" value="PRK04208.1"/>
    <property type="match status" value="1"/>
</dbReference>
<dbReference type="PANTHER" id="PTHR42704">
    <property type="entry name" value="RIBULOSE BISPHOSPHATE CARBOXYLASE"/>
    <property type="match status" value="1"/>
</dbReference>
<dbReference type="PANTHER" id="PTHR42704:SF15">
    <property type="entry name" value="RIBULOSE BISPHOSPHATE CARBOXYLASE LARGE CHAIN"/>
    <property type="match status" value="1"/>
</dbReference>
<dbReference type="Pfam" id="PF00016">
    <property type="entry name" value="RuBisCO_large"/>
    <property type="match status" value="1"/>
</dbReference>
<dbReference type="Pfam" id="PF02788">
    <property type="entry name" value="RuBisCO_large_N"/>
    <property type="match status" value="1"/>
</dbReference>
<dbReference type="SFLD" id="SFLDG01052">
    <property type="entry name" value="RuBisCO"/>
    <property type="match status" value="1"/>
</dbReference>
<dbReference type="SFLD" id="SFLDS00014">
    <property type="entry name" value="RuBisCO"/>
    <property type="match status" value="1"/>
</dbReference>
<dbReference type="SFLD" id="SFLDG00301">
    <property type="entry name" value="RuBisCO-like_proteins"/>
    <property type="match status" value="1"/>
</dbReference>
<dbReference type="SUPFAM" id="SSF51649">
    <property type="entry name" value="RuBisCo, C-terminal domain"/>
    <property type="match status" value="1"/>
</dbReference>
<dbReference type="SUPFAM" id="SSF54966">
    <property type="entry name" value="RuBisCO, large subunit, small (N-terminal) domain"/>
    <property type="match status" value="1"/>
</dbReference>
<dbReference type="PROSITE" id="PS00157">
    <property type="entry name" value="RUBISCO_LARGE"/>
    <property type="match status" value="1"/>
</dbReference>
<reference key="1">
    <citation type="journal article" date="1990" name="J. Biol. Chem.">
        <title>Comparisons of rbcL genes for the large subunit of ribulose-bisphosphate carboxylase from closely related C3 and C4 plant species.</title>
        <authorList>
            <person name="Hudson G.S."/>
            <person name="Mahon J.D."/>
            <person name="Anderson P.A."/>
            <person name="Gibbs M.J."/>
            <person name="Badger M.R."/>
            <person name="Andrews T.J."/>
            <person name="Whitfeld P.R."/>
        </authorList>
    </citation>
    <scope>NUCLEOTIDE SEQUENCE [GENOMIC DNA]</scope>
</reference>
<geneLocation type="chloroplast"/>